<feature type="chain" id="PRO_0000222928" description="Capsid protein">
    <location>
        <begin position="1"/>
        <end position="202"/>
    </location>
</feature>
<sequence length="202" mass="21482">MTSSRSTELIETQEDVVRKLSQKTPVSNFSALPLPNGPQAPTQLQPFQFEFPLPAGQEGSVTLPLATFPKMATFLSRHRRAQLTQLHAVVSPSAVSIGHPLTVQLIWVPASSTTTSSQILGTYGGQQISVGGQVTNSSPAKVSANLLMMNPHIKDSTSYTDTPKLLVYSTPAVPDDKLTTSSASIIVFGEVLLSSPQLNPSA</sequence>
<keyword id="KW-0167">Capsid protein</keyword>
<keyword id="KW-1142">T=3 icosahedral capsid protein</keyword>
<keyword id="KW-0946">Virion</keyword>
<organismHost>
    <name type="scientific">Erysimum</name>
    <dbReference type="NCBI Taxonomy" id="65352"/>
</organismHost>
<evidence type="ECO:0000250" key="1">
    <source>
        <dbReference type="UniProtKB" id="P20125"/>
    </source>
</evidence>
<evidence type="ECO:0000305" key="2"/>
<protein>
    <recommendedName>
        <fullName>Capsid protein</fullName>
    </recommendedName>
    <alternativeName>
        <fullName>Coat protein</fullName>
    </alternativeName>
    <alternativeName>
        <fullName>Virion protein</fullName>
    </alternativeName>
</protein>
<organism>
    <name type="scientific">Erysimum latent virus</name>
    <name type="common">ELV</name>
    <dbReference type="NCBI Taxonomy" id="12152"/>
    <lineage>
        <taxon>Viruses</taxon>
        <taxon>Riboviria</taxon>
        <taxon>Orthornavirae</taxon>
        <taxon>Kitrinoviricota</taxon>
        <taxon>Alsuviricetes</taxon>
        <taxon>Tymovirales</taxon>
        <taxon>Tymoviridae</taxon>
        <taxon>Tymovirus</taxon>
        <taxon>Tymovirus erysimi</taxon>
    </lineage>
</organism>
<reference key="1">
    <citation type="journal article" date="1992" name="J. Gen. Virol.">
        <title>Comparisons of the genomic sequences of erysimum latent virus and other tymoviruses: a search for the molecular basis of their host specificities.</title>
        <authorList>
            <person name="Srifah P."/>
            <person name="Keese P."/>
            <person name="Weiller G."/>
            <person name="Gibbs A."/>
        </authorList>
    </citation>
    <scope>NUCLEOTIDE SEQUENCE</scope>
</reference>
<reference key="2">
    <citation type="journal article" date="1990" name="J. Gen. Virol.">
        <title>The primary structure of the virion protein gene and encoded protein of erysimum latent tymovirus.</title>
        <authorList>
            <person name="Srifah P."/>
            <person name="Keese P."/>
            <person name="Shukla D."/>
            <person name="Gibbs A."/>
        </authorList>
    </citation>
    <scope>NUCLEOTIDE SEQUENCE</scope>
</reference>
<proteinExistence type="inferred from homology"/>
<dbReference type="PIR" id="JQ1556">
    <property type="entry name" value="JQ1556"/>
</dbReference>
<dbReference type="RefSeq" id="NP_047921.1">
    <property type="nucleotide sequence ID" value="NC_001977.1"/>
</dbReference>
<dbReference type="SMR" id="P35927"/>
<dbReference type="GeneID" id="1493965"/>
<dbReference type="KEGG" id="vg:1493965"/>
<dbReference type="OrthoDB" id="15633at10239"/>
<dbReference type="GO" id="GO:0039617">
    <property type="term" value="C:T=3 icosahedral viral capsid"/>
    <property type="evidence" value="ECO:0007669"/>
    <property type="project" value="UniProtKB-KW"/>
</dbReference>
<dbReference type="GO" id="GO:0005198">
    <property type="term" value="F:structural molecule activity"/>
    <property type="evidence" value="ECO:0007669"/>
    <property type="project" value="InterPro"/>
</dbReference>
<dbReference type="Gene3D" id="2.60.120.20">
    <property type="match status" value="1"/>
</dbReference>
<dbReference type="InterPro" id="IPR000574">
    <property type="entry name" value="Tymo_coat"/>
</dbReference>
<dbReference type="InterPro" id="IPR029053">
    <property type="entry name" value="Viral_coat"/>
</dbReference>
<dbReference type="Pfam" id="PF00983">
    <property type="entry name" value="Tymo_coat"/>
    <property type="match status" value="1"/>
</dbReference>
<dbReference type="SUPFAM" id="SSF88633">
    <property type="entry name" value="Positive stranded ssRNA viruses"/>
    <property type="match status" value="1"/>
</dbReference>
<name>CAPSD_ELV</name>
<comment type="function">
    <text evidence="1">Self-assembles to form a T=3 icosahedral capsid composed of 180 copies of the capsid protein. The capsid encapsulates the single-stranded RNA genome.</text>
</comment>
<comment type="subcellular location">
    <subcellularLocation>
        <location evidence="1">Virion</location>
    </subcellularLocation>
</comment>
<comment type="similarity">
    <text evidence="2">Belongs to the tymoviruses capsid protein family.</text>
</comment>
<accession>P35927</accession>